<sequence>MRNASGPRGPSLATLLFLLLIPEGGCERIIGGDTVVPHSRPYMALLKLSSNTICAGALIEKNWVLTAAHCNVGKRSKFILGAHSINKEPEQQILTVKKAFPYPCYDEYTREGDLQLVRLKKKATVNRNVAILHLPKKGDDVKPGTRCRVAGWGRFGNKSAPSETLREVNITVIDRKICNDEKHYNFHPVIGLNMICAGDLRGGKDSCNGDSGSPLLCDGILRGITSFGGEKCGDRRWPGVYTFLSDKHLNWIKKIMKGSV</sequence>
<gene>
    <name type="primary">Gzma</name>
    <name type="synonym">Ctla-3</name>
    <name type="synonym">Ctla3</name>
    <name type="synonym">Mtsp-1</name>
</gene>
<protein>
    <recommendedName>
        <fullName>Granzyme A</fullName>
        <ecNumber>3.4.21.78</ecNumber>
    </recommendedName>
    <alternativeName>
        <fullName>Autocrine thymic lymphoma granzyme-like serine protease</fullName>
    </alternativeName>
    <alternativeName>
        <fullName>CTLA-3</fullName>
    </alternativeName>
    <alternativeName>
        <fullName>Fragmentin-1</fullName>
    </alternativeName>
    <alternativeName>
        <fullName>T cell-specific serine protease 1</fullName>
        <shortName>TSP-1</shortName>
    </alternativeName>
</protein>
<feature type="signal peptide">
    <location>
        <begin position="1"/>
        <end position="26"/>
    </location>
</feature>
<feature type="propeptide" id="PRO_0000027395" description="Activation peptide" evidence="5 6">
    <location>
        <begin position="27"/>
        <end position="28"/>
    </location>
</feature>
<feature type="chain" id="PRO_0000027396" description="Granzyme A">
    <location>
        <begin position="29"/>
        <end position="260"/>
    </location>
</feature>
<feature type="domain" description="Peptidase S1" evidence="3">
    <location>
        <begin position="29"/>
        <end position="257"/>
    </location>
</feature>
<feature type="active site" description="Charge relay system" evidence="1">
    <location>
        <position position="69"/>
    </location>
</feature>
<feature type="active site" description="Charge relay system" evidence="1">
    <location>
        <position position="113"/>
    </location>
</feature>
<feature type="active site" description="Charge relay system" evidence="1">
    <location>
        <position position="211"/>
    </location>
</feature>
<feature type="glycosylation site" description="N-linked (GlcNAc...) asparagine" evidence="2">
    <location>
        <position position="157"/>
    </location>
</feature>
<feature type="glycosylation site" description="N-linked (GlcNAc...) asparagine" evidence="2">
    <location>
        <position position="169"/>
    </location>
</feature>
<feature type="disulfide bond" evidence="3">
    <location>
        <begin position="54"/>
        <end position="70"/>
    </location>
</feature>
<feature type="disulfide bond" evidence="3">
    <location>
        <begin position="147"/>
        <end position="217"/>
    </location>
</feature>
<feature type="disulfide bond" evidence="3">
    <location>
        <begin position="178"/>
        <end position="196"/>
    </location>
</feature>
<feature type="disulfide bond" evidence="3">
    <location>
        <begin position="207"/>
        <end position="232"/>
    </location>
</feature>
<feature type="splice variant" id="VSP_005373" description="In isoform HF2." evidence="7">
    <original>MRNASGPRGPSLATLLFLLLIPE</original>
    <variation>MSKEMNEILLSWEINLSSKR</variation>
    <location>
        <begin position="1"/>
        <end position="23"/>
    </location>
</feature>
<proteinExistence type="evidence at protein level"/>
<keyword id="KW-0025">Alternative splicing</keyword>
<keyword id="KW-0204">Cytolysis</keyword>
<keyword id="KW-0903">Direct protein sequencing</keyword>
<keyword id="KW-1015">Disulfide bond</keyword>
<keyword id="KW-0325">Glycoprotein</keyword>
<keyword id="KW-0378">Hydrolase</keyword>
<keyword id="KW-0645">Protease</keyword>
<keyword id="KW-1185">Reference proteome</keyword>
<keyword id="KW-0964">Secreted</keyword>
<keyword id="KW-0720">Serine protease</keyword>
<keyword id="KW-0732">Signal</keyword>
<keyword id="KW-0865">Zymogen</keyword>
<reference key="1">
    <citation type="journal article" date="1988" name="Oncogene Res.">
        <title>cDNA clones from autocrine thymic lymphoma cells encode two mitogenic proteins, a serine protease and a truncated T-cell receptor beta-chain.</title>
        <authorList>
            <person name="Bogenberger J."/>
            <person name="Haas M."/>
        </authorList>
    </citation>
    <scope>NUCLEOTIDE SEQUENCE [MRNA]</scope>
    <source>
        <strain>C57BL/6J</strain>
    </source>
</reference>
<reference key="2">
    <citation type="journal article" date="1992" name="Genomics">
        <title>Organization of the gene encoding the mouse T-cell-specific serine proteinase 'granzyme A'.</title>
        <authorList>
            <person name="Ebnet K."/>
            <person name="Kramer M.D."/>
            <person name="Simon M.M."/>
        </authorList>
    </citation>
    <scope>NUCLEOTIDE SEQUENCE [GENOMIC DNA]</scope>
    <source>
        <strain>C57BL/6J</strain>
    </source>
</reference>
<reference key="3">
    <citation type="journal article" date="1992" name="J. Biol. Chem.">
        <title>Genomic organization of the mouse granzyme A gene. Two mRNAs encode the same mature granzyme A with different leader peptides.</title>
        <authorList>
            <person name="Hershberger R.J."/>
            <person name="Gershenfeld H.K."/>
            <person name="Weissman I.L."/>
            <person name="Su L."/>
        </authorList>
    </citation>
    <scope>NUCLEOTIDE SEQUENCE [GENOMIC DNA] (ISOFORMS HF1 AND HF2)</scope>
    <scope>TISSUE SPECIFICITY</scope>
</reference>
<reference key="4">
    <citation type="journal article" date="2004" name="Genome Res.">
        <title>The status, quality, and expansion of the NIH full-length cDNA project: the Mammalian Gene Collection (MGC).</title>
        <authorList>
            <consortium name="The MGC Project Team"/>
        </authorList>
    </citation>
    <scope>NUCLEOTIDE SEQUENCE [LARGE SCALE MRNA] (ISOFORM HF1)</scope>
</reference>
<reference key="5">
    <citation type="journal article" date="1988" name="Immunol. Rev.">
        <title>Granzymes, a family of serine proteases released from granules of cytolytic T lymphocytes upon T cell receptor stimulation.</title>
        <authorList>
            <person name="Jenne D.E."/>
            <person name="Tschopp J."/>
        </authorList>
    </citation>
    <scope>NUCLEOTIDE SEQUENCE [MRNA] OF 1-37</scope>
</reference>
<reference key="6">
    <citation type="journal article" date="1986" name="Science">
        <title>Cloning of a cDNA for a T cell-specific serine protease from a cytotoxic T lymphocyte.</title>
        <authorList>
            <person name="Gershenfeld H.K."/>
            <person name="Weissman I.L."/>
        </authorList>
    </citation>
    <scope>NUCLEOTIDE SEQUENCE [MRNA] OF 12-260</scope>
</reference>
<reference key="7">
    <citation type="journal article" date="1987" name="Cell">
        <title>A family of serine esterases in lytic granules of cytolytic T lymphocytes.</title>
        <authorList>
            <person name="Masson D."/>
            <person name="Tschopp J."/>
        </authorList>
    </citation>
    <scope>PROTEIN SEQUENCE OF 29-48</scope>
</reference>
<reference key="8">
    <citation type="journal article" date="1986" name="FEBS Lett.">
        <title>Identification of granzyme A isolated from cytotoxic T-lymphocyte-granules as one of the proteases encoded by CTL-specific genes.</title>
        <authorList>
            <person name="Masson D."/>
            <person name="Zamai M."/>
            <person name="Tschopp J."/>
        </authorList>
    </citation>
    <scope>PROTEIN SEQUENCE OF 29-53</scope>
</reference>
<reference key="9">
    <citation type="journal article" date="1988" name="Eur. J. Immunol.">
        <title>Induction of T cell serine proteinase 1 (TSP-1)-specific mRNA in mouse T lymphocytes.</title>
        <authorList>
            <person name="Simon H.G."/>
            <person name="Fruth U."/>
            <person name="Eckerskorn C."/>
            <person name="Lottspeich F."/>
            <person name="Kramer M.D."/>
            <person name="Nerz G."/>
            <person name="Simon M.M."/>
        </authorList>
    </citation>
    <scope>NUCLEOTIDE SEQUENCE [MRNA] OF 29-46</scope>
</reference>
<name>GRAA_MOUSE</name>
<accession>P11032</accession>
<accession>P15118</accession>
<dbReference type="EC" id="3.4.21.78"/>
<dbReference type="EMBL" id="X14799">
    <property type="protein sequence ID" value="CAA32905.1"/>
    <property type="molecule type" value="mRNA"/>
</dbReference>
<dbReference type="EMBL" id="X62542">
    <property type="protein sequence ID" value="CAA44426.1"/>
    <property type="molecule type" value="Genomic_DNA"/>
</dbReference>
<dbReference type="EMBL" id="X62543">
    <property type="protein sequence ID" value="CAA44426.1"/>
    <property type="status" value="JOINED"/>
    <property type="molecule type" value="Genomic_DNA"/>
</dbReference>
<dbReference type="EMBL" id="X60310">
    <property type="protein sequence ID" value="CAA44426.1"/>
    <property type="status" value="JOINED"/>
    <property type="molecule type" value="Genomic_DNA"/>
</dbReference>
<dbReference type="EMBL" id="X60311">
    <property type="protein sequence ID" value="CAA44426.1"/>
    <property type="status" value="JOINED"/>
    <property type="molecule type" value="Genomic_DNA"/>
</dbReference>
<dbReference type="EMBL" id="L01429">
    <property type="protein sequence ID" value="AAA99898.1"/>
    <property type="molecule type" value="Genomic_DNA"/>
</dbReference>
<dbReference type="EMBL" id="L01426">
    <property type="protein sequence ID" value="AAA99898.1"/>
    <property type="status" value="JOINED"/>
    <property type="molecule type" value="Genomic_DNA"/>
</dbReference>
<dbReference type="EMBL" id="L01427">
    <property type="protein sequence ID" value="AAA99898.1"/>
    <property type="status" value="JOINED"/>
    <property type="molecule type" value="Genomic_DNA"/>
</dbReference>
<dbReference type="EMBL" id="L01441">
    <property type="protein sequence ID" value="AAA99898.1"/>
    <property type="status" value="JOINED"/>
    <property type="molecule type" value="Genomic_DNA"/>
</dbReference>
<dbReference type="EMBL" id="L01429">
    <property type="protein sequence ID" value="AAA99897.1"/>
    <property type="molecule type" value="Genomic_DNA"/>
</dbReference>
<dbReference type="EMBL" id="L01426">
    <property type="protein sequence ID" value="AAA99897.1"/>
    <property type="status" value="JOINED"/>
    <property type="molecule type" value="Genomic_DNA"/>
</dbReference>
<dbReference type="EMBL" id="L01427">
    <property type="protein sequence ID" value="AAA99897.1"/>
    <property type="status" value="JOINED"/>
    <property type="molecule type" value="Genomic_DNA"/>
</dbReference>
<dbReference type="EMBL" id="L01441">
    <property type="protein sequence ID" value="AAA99897.1"/>
    <property type="status" value="JOINED"/>
    <property type="molecule type" value="Genomic_DNA"/>
</dbReference>
<dbReference type="EMBL" id="BC061146">
    <property type="protein sequence ID" value="AAH61146.1"/>
    <property type="molecule type" value="mRNA"/>
</dbReference>
<dbReference type="EMBL" id="M26183">
    <property type="protein sequence ID" value="AAA37735.1"/>
    <property type="molecule type" value="mRNA"/>
</dbReference>
<dbReference type="EMBL" id="M13226">
    <property type="protein sequence ID" value="AAA40134.1"/>
    <property type="molecule type" value="mRNA"/>
</dbReference>
<dbReference type="CCDS" id="CCDS26782.1">
    <molecule id="P11032-1"/>
</dbReference>
<dbReference type="PIR" id="A24807">
    <property type="entry name" value="A24807"/>
</dbReference>
<dbReference type="PIR" id="A45061">
    <property type="entry name" value="A45061"/>
</dbReference>
<dbReference type="PIR" id="B45061">
    <property type="entry name" value="B45061"/>
</dbReference>
<dbReference type="RefSeq" id="NP_034500.1">
    <molecule id="P11032-1"/>
    <property type="nucleotide sequence ID" value="NM_010370.3"/>
</dbReference>
<dbReference type="SMR" id="P11032"/>
<dbReference type="BioGRID" id="200134">
    <property type="interactions" value="1"/>
</dbReference>
<dbReference type="FunCoup" id="P11032">
    <property type="interactions" value="980"/>
</dbReference>
<dbReference type="STRING" id="10090.ENSMUSP00000023897"/>
<dbReference type="MEROPS" id="S01.135"/>
<dbReference type="GlyCosmos" id="P11032">
    <property type="glycosylation" value="2 sites, No reported glycans"/>
</dbReference>
<dbReference type="GlyGen" id="P11032">
    <property type="glycosylation" value="3 sites, 3 N-linked glycans (3 sites)"/>
</dbReference>
<dbReference type="PhosphoSitePlus" id="P11032"/>
<dbReference type="PaxDb" id="10090-ENSMUSP00000023897"/>
<dbReference type="PeptideAtlas" id="P11032"/>
<dbReference type="ProteomicsDB" id="271284">
    <molecule id="P11032-1"/>
</dbReference>
<dbReference type="ProteomicsDB" id="271285">
    <molecule id="P11032-2"/>
</dbReference>
<dbReference type="Antibodypedia" id="11050">
    <property type="antibodies" value="384 antibodies from 40 providers"/>
</dbReference>
<dbReference type="DNASU" id="14938"/>
<dbReference type="Ensembl" id="ENSMUST00000023897.7">
    <molecule id="P11032-1"/>
    <property type="protein sequence ID" value="ENSMUSP00000023897.6"/>
    <property type="gene ID" value="ENSMUSG00000023132.9"/>
</dbReference>
<dbReference type="Ensembl" id="ENSMUST00000224282.2">
    <molecule id="P11032-2"/>
    <property type="protein sequence ID" value="ENSMUSP00000153593.2"/>
    <property type="gene ID" value="ENSMUSG00000023132.9"/>
</dbReference>
<dbReference type="GeneID" id="14938"/>
<dbReference type="KEGG" id="mmu:14938"/>
<dbReference type="UCSC" id="uc007rxc.1">
    <molecule id="P11032-1"/>
    <property type="organism name" value="mouse"/>
</dbReference>
<dbReference type="UCSC" id="uc011zeu.1">
    <molecule id="P11032-2"/>
    <property type="organism name" value="mouse"/>
</dbReference>
<dbReference type="AGR" id="MGI:109266"/>
<dbReference type="CTD" id="3001"/>
<dbReference type="MGI" id="MGI:109266">
    <property type="gene designation" value="Gzma"/>
</dbReference>
<dbReference type="VEuPathDB" id="HostDB:ENSMUSG00000023132"/>
<dbReference type="eggNOG" id="KOG3627">
    <property type="taxonomic scope" value="Eukaryota"/>
</dbReference>
<dbReference type="GeneTree" id="ENSGT00940000159928"/>
<dbReference type="HOGENOM" id="CLU_006842_1_0_1"/>
<dbReference type="InParanoid" id="P11032"/>
<dbReference type="OMA" id="YPCYDPA"/>
<dbReference type="OrthoDB" id="6755574at2759"/>
<dbReference type="PhylomeDB" id="P11032"/>
<dbReference type="TreeFam" id="TF333630"/>
<dbReference type="BRENDA" id="3.4.21.78">
    <property type="organism ID" value="3474"/>
</dbReference>
<dbReference type="BioGRID-ORCS" id="14938">
    <property type="hits" value="0 hits in 79 CRISPR screens"/>
</dbReference>
<dbReference type="ChiTaRS" id="Gzma">
    <property type="organism name" value="mouse"/>
</dbReference>
<dbReference type="PRO" id="PR:P11032"/>
<dbReference type="Proteomes" id="UP000000589">
    <property type="component" value="Chromosome 13"/>
</dbReference>
<dbReference type="RNAct" id="P11032">
    <property type="molecule type" value="protein"/>
</dbReference>
<dbReference type="Bgee" id="ENSMUSG00000023132">
    <property type="expression patterns" value="Expressed in gastrula and 84 other cell types or tissues"/>
</dbReference>
<dbReference type="ExpressionAtlas" id="P11032">
    <property type="expression patterns" value="baseline and differential"/>
</dbReference>
<dbReference type="GO" id="GO:0005737">
    <property type="term" value="C:cytoplasm"/>
    <property type="evidence" value="ECO:0007669"/>
    <property type="project" value="Ensembl"/>
</dbReference>
<dbReference type="GO" id="GO:0005615">
    <property type="term" value="C:extracellular space"/>
    <property type="evidence" value="ECO:0000314"/>
    <property type="project" value="MGI"/>
</dbReference>
<dbReference type="GO" id="GO:0005634">
    <property type="term" value="C:nucleus"/>
    <property type="evidence" value="ECO:0000314"/>
    <property type="project" value="UniProtKB"/>
</dbReference>
<dbReference type="GO" id="GO:0042803">
    <property type="term" value="F:protein homodimerization activity"/>
    <property type="evidence" value="ECO:0000250"/>
    <property type="project" value="UniProtKB"/>
</dbReference>
<dbReference type="GO" id="GO:0004252">
    <property type="term" value="F:serine-type endopeptidase activity"/>
    <property type="evidence" value="ECO:0000250"/>
    <property type="project" value="UniProtKB"/>
</dbReference>
<dbReference type="GO" id="GO:0008236">
    <property type="term" value="F:serine-type peptidase activity"/>
    <property type="evidence" value="ECO:0000314"/>
    <property type="project" value="MGI"/>
</dbReference>
<dbReference type="GO" id="GO:1902483">
    <property type="term" value="P:cytotoxic T cell pyroptotic cell death"/>
    <property type="evidence" value="ECO:0000250"/>
    <property type="project" value="UniProtKB"/>
</dbReference>
<dbReference type="GO" id="GO:0140507">
    <property type="term" value="P:granzyme-mediated programmed cell death signaling pathway"/>
    <property type="evidence" value="ECO:0000250"/>
    <property type="project" value="UniProtKB"/>
</dbReference>
<dbReference type="GO" id="GO:0031640">
    <property type="term" value="P:killing of cells of another organism"/>
    <property type="evidence" value="ECO:0007669"/>
    <property type="project" value="UniProtKB-KW"/>
</dbReference>
<dbReference type="GO" id="GO:0043392">
    <property type="term" value="P:negative regulation of DNA binding"/>
    <property type="evidence" value="ECO:0000250"/>
    <property type="project" value="UniProtKB"/>
</dbReference>
<dbReference type="GO" id="GO:0032078">
    <property type="term" value="P:negative regulation of endodeoxyribonuclease activity"/>
    <property type="evidence" value="ECO:0000250"/>
    <property type="project" value="UniProtKB"/>
</dbReference>
<dbReference type="GO" id="GO:0051354">
    <property type="term" value="P:negative regulation of oxidoreductase activity"/>
    <property type="evidence" value="ECO:0000250"/>
    <property type="project" value="UniProtKB"/>
</dbReference>
<dbReference type="GO" id="GO:0043065">
    <property type="term" value="P:positive regulation of apoptotic process"/>
    <property type="evidence" value="ECO:0000250"/>
    <property type="project" value="UniProtKB"/>
</dbReference>
<dbReference type="GO" id="GO:0051604">
    <property type="term" value="P:protein maturation"/>
    <property type="evidence" value="ECO:0007669"/>
    <property type="project" value="Ensembl"/>
</dbReference>
<dbReference type="GO" id="GO:0051603">
    <property type="term" value="P:proteolysis involved in protein catabolic process"/>
    <property type="evidence" value="ECO:0000250"/>
    <property type="project" value="UniProtKB"/>
</dbReference>
<dbReference type="GO" id="GO:0070269">
    <property type="term" value="P:pyroptotic inflammatory response"/>
    <property type="evidence" value="ECO:0000250"/>
    <property type="project" value="UniProtKB"/>
</dbReference>
<dbReference type="GO" id="GO:0009617">
    <property type="term" value="P:response to bacterium"/>
    <property type="evidence" value="ECO:0000270"/>
    <property type="project" value="MGI"/>
</dbReference>
<dbReference type="CDD" id="cd00190">
    <property type="entry name" value="Tryp_SPc"/>
    <property type="match status" value="1"/>
</dbReference>
<dbReference type="FunFam" id="2.40.10.10:FF:000120">
    <property type="entry name" value="Putative serine protease"/>
    <property type="match status" value="1"/>
</dbReference>
<dbReference type="Gene3D" id="2.40.10.10">
    <property type="entry name" value="Trypsin-like serine proteases"/>
    <property type="match status" value="2"/>
</dbReference>
<dbReference type="InterPro" id="IPR009003">
    <property type="entry name" value="Peptidase_S1_PA"/>
</dbReference>
<dbReference type="InterPro" id="IPR043504">
    <property type="entry name" value="Peptidase_S1_PA_chymotrypsin"/>
</dbReference>
<dbReference type="InterPro" id="IPR001314">
    <property type="entry name" value="Peptidase_S1A"/>
</dbReference>
<dbReference type="InterPro" id="IPR001254">
    <property type="entry name" value="Trypsin_dom"/>
</dbReference>
<dbReference type="InterPro" id="IPR018114">
    <property type="entry name" value="TRYPSIN_HIS"/>
</dbReference>
<dbReference type="InterPro" id="IPR033116">
    <property type="entry name" value="TRYPSIN_SER"/>
</dbReference>
<dbReference type="PANTHER" id="PTHR24271:SF69">
    <property type="entry name" value="GRANZYME A"/>
    <property type="match status" value="1"/>
</dbReference>
<dbReference type="PANTHER" id="PTHR24271">
    <property type="entry name" value="KALLIKREIN-RELATED"/>
    <property type="match status" value="1"/>
</dbReference>
<dbReference type="Pfam" id="PF00089">
    <property type="entry name" value="Trypsin"/>
    <property type="match status" value="1"/>
</dbReference>
<dbReference type="PRINTS" id="PR00722">
    <property type="entry name" value="CHYMOTRYPSIN"/>
</dbReference>
<dbReference type="SMART" id="SM00020">
    <property type="entry name" value="Tryp_SPc"/>
    <property type="match status" value="1"/>
</dbReference>
<dbReference type="SUPFAM" id="SSF50494">
    <property type="entry name" value="Trypsin-like serine proteases"/>
    <property type="match status" value="1"/>
</dbReference>
<dbReference type="PROSITE" id="PS50240">
    <property type="entry name" value="TRYPSIN_DOM"/>
    <property type="match status" value="1"/>
</dbReference>
<dbReference type="PROSITE" id="PS00134">
    <property type="entry name" value="TRYPSIN_HIS"/>
    <property type="match status" value="1"/>
</dbReference>
<dbReference type="PROSITE" id="PS00135">
    <property type="entry name" value="TRYPSIN_SER"/>
    <property type="match status" value="1"/>
</dbReference>
<organism>
    <name type="scientific">Mus musculus</name>
    <name type="common">Mouse</name>
    <dbReference type="NCBI Taxonomy" id="10090"/>
    <lineage>
        <taxon>Eukaryota</taxon>
        <taxon>Metazoa</taxon>
        <taxon>Chordata</taxon>
        <taxon>Craniata</taxon>
        <taxon>Vertebrata</taxon>
        <taxon>Euteleostomi</taxon>
        <taxon>Mammalia</taxon>
        <taxon>Eutheria</taxon>
        <taxon>Euarchontoglires</taxon>
        <taxon>Glires</taxon>
        <taxon>Rodentia</taxon>
        <taxon>Myomorpha</taxon>
        <taxon>Muroidea</taxon>
        <taxon>Muridae</taxon>
        <taxon>Murinae</taxon>
        <taxon>Mus</taxon>
        <taxon>Mus</taxon>
    </lineage>
</organism>
<comment type="function">
    <text evidence="1">Abundant protease in the cytosolic granules of cytotoxic T-cells and NK-cells which activates caspase-independent pyroptosis when delivered into the target cell through the immunological synapse. It cleaves after Lys or Arg. Cleaves APEX1 after 'Lys-31' and destroys its oxidative repair activity. Cleaves the nucleosome assembly protein SET after 'Lys-189', which disrupts its nucleosome assembly activity and allows the SET complex to translocate into the nucleus to nick and degrade the DNA.</text>
</comment>
<comment type="catalytic activity">
    <reaction evidence="1">
        <text>Hydrolysis of proteins, including fibronectin, type IV collagen and nucleolin. Preferential cleavage: -Arg-|-Xaa-, -Lys-|-Xaa- &gt;&gt; -Phe-|-Xaa- in small molecule substrates.</text>
        <dbReference type="EC" id="3.4.21.78"/>
    </reaction>
</comment>
<comment type="subunit">
    <text evidence="1">Homodimer; disulfide-linked. Interacts with APEX1.</text>
</comment>
<comment type="subcellular location">
    <subcellularLocation>
        <location evidence="1">Secreted</location>
    </subcellularLocation>
    <subcellularLocation>
        <location evidence="1">Cytoplasmic granule</location>
    </subcellularLocation>
    <text evidence="1">Delivered into the target cell by perforin.</text>
</comment>
<comment type="alternative products">
    <event type="alternative splicing"/>
    <isoform>
        <id>P11032-1</id>
        <name>HF1</name>
        <sequence type="displayed"/>
    </isoform>
    <isoform>
        <id>P11032-2</id>
        <name>HF2</name>
        <sequence type="described" ref="VSP_005373"/>
    </isoform>
</comment>
<comment type="tissue specificity">
    <text evidence="4">Found in cytotoxic lymphocytes and in normal lymphoid tissues such as thymus and spleen.</text>
</comment>
<comment type="tissue specificity">
    <molecule>Isoform HF1</molecule>
    <text evidence="4">More abundant in lymphoid tissues than isoform HF2.</text>
</comment>
<comment type="similarity">
    <text evidence="3">Belongs to the peptidase S1 family. Granzyme subfamily.</text>
</comment>
<comment type="caution">
    <molecule>Isoform HF2</molecule>
    <text evidence="8">The predicted cleavage site for the activation peptide of HF2 is uncertain. It could have either 2 (ER) or 7 (KRGGCER) AA.</text>
</comment>
<evidence type="ECO:0000250" key="1">
    <source>
        <dbReference type="UniProtKB" id="P12544"/>
    </source>
</evidence>
<evidence type="ECO:0000255" key="2"/>
<evidence type="ECO:0000255" key="3">
    <source>
        <dbReference type="PROSITE-ProRule" id="PRU00274"/>
    </source>
</evidence>
<evidence type="ECO:0000269" key="4">
    <source>
    </source>
</evidence>
<evidence type="ECO:0000269" key="5">
    <source>
    </source>
</evidence>
<evidence type="ECO:0000269" key="6">
    <source>
    </source>
</evidence>
<evidence type="ECO:0000305" key="7"/>
<evidence type="ECO:0000305" key="8">
    <source>
    </source>
</evidence>